<dbReference type="EMBL" id="AM410148">
    <property type="protein sequence ID" value="CAL68958.1"/>
    <property type="molecule type" value="Genomic_DNA"/>
</dbReference>
<dbReference type="RefSeq" id="XP_018876132.2">
    <property type="nucleotide sequence ID" value="XM_019020587.3"/>
</dbReference>
<dbReference type="STRING" id="9593.ENSGGOP00000039439"/>
<dbReference type="GeneID" id="109025579"/>
<dbReference type="InParanoid" id="A4H243"/>
<dbReference type="Proteomes" id="UP000001519">
    <property type="component" value="Unplaced"/>
</dbReference>
<dbReference type="GO" id="GO:0005576">
    <property type="term" value="C:extracellular region"/>
    <property type="evidence" value="ECO:0007669"/>
    <property type="project" value="UniProtKB-SubCell"/>
</dbReference>
<dbReference type="GO" id="GO:0050829">
    <property type="term" value="P:defense response to Gram-negative bacterium"/>
    <property type="evidence" value="ECO:0007669"/>
    <property type="project" value="UniProtKB-ARBA"/>
</dbReference>
<dbReference type="GO" id="GO:0007338">
    <property type="term" value="P:single fertilization"/>
    <property type="evidence" value="ECO:0007669"/>
    <property type="project" value="UniProtKB-KW"/>
</dbReference>
<dbReference type="InterPro" id="IPR050544">
    <property type="entry name" value="Beta-defensin"/>
</dbReference>
<dbReference type="PANTHER" id="PTHR15001:SF3">
    <property type="entry name" value="BETA-DEFENSIN 123"/>
    <property type="match status" value="1"/>
</dbReference>
<dbReference type="PANTHER" id="PTHR15001">
    <property type="entry name" value="BETA-DEFENSIN 123-RELATED"/>
    <property type="match status" value="1"/>
</dbReference>
<name>DB126_GORGO</name>
<feature type="signal peptide" evidence="4">
    <location>
        <begin position="1"/>
        <end position="20"/>
    </location>
</feature>
<feature type="chain" id="PRO_0000436298" description="Beta-defensin 126">
    <location>
        <begin position="21"/>
        <end position="111"/>
    </location>
</feature>
<feature type="region of interest" description="In vitro binds to LPS, mediates antimicrobial activity and inhibits LPS-mediated inflammation" evidence="3">
    <location>
        <begin position="21"/>
        <end position="63"/>
    </location>
</feature>
<feature type="disulfide bond" evidence="1">
    <location>
        <begin position="27"/>
        <end position="58"/>
    </location>
</feature>
<feature type="disulfide bond" evidence="1">
    <location>
        <begin position="34"/>
        <end position="52"/>
    </location>
</feature>
<feature type="disulfide bond" evidence="1">
    <location>
        <begin position="38"/>
        <end position="59"/>
    </location>
</feature>
<feature type="disulfide bond" description="Interchain" evidence="2">
    <location>
        <position position="72"/>
    </location>
</feature>
<reference key="1">
    <citation type="submission" date="2006-11" db="EMBL/GenBank/DDBJ databases">
        <title>Evolution and sequence variation of human beta-defensin genes.</title>
        <authorList>
            <person name="Hollox E.J."/>
            <person name="Armour J.A.L."/>
        </authorList>
    </citation>
    <scope>NUCLEOTIDE SEQUENCE [GENOMIC DNA]</scope>
</reference>
<comment type="function">
    <text evidence="2 3">Highly glycosylated atypical beta-defensin involved in several aspects of sperm function. Facilitates sperm transport in the female reproductive tract and contributes to sperm protection against immunodetection; both functions are probably implicating the negative surface charge provided by its O-linked oligosaccharides in the sperm glycocalyx. Involved in binding of sperm to oviductal epithelial cells to form a sperm reservoir until ovulation. Release from the sperm surface during capacitation and ovaluation by an elevation of oviductal fluid pH is unmasking other surface components and allows sperm to penetrate the cumulus matrix and bind to the zona pellucida of the oocyte. In vitro has antimicrobial activity and may inhibit LPS-mediated inflammation (By similarity).</text>
</comment>
<comment type="subunit">
    <text evidence="2">Homodimer or homooligomer; disulfide-linked.</text>
</comment>
<comment type="subcellular location">
    <subcellularLocation>
        <location evidence="2">Secreted</location>
    </subcellularLocation>
    <text evidence="2">Secreted by epididymal cells and is absorbed to the surface of sperm during transit through the epididymis.</text>
</comment>
<comment type="PTM">
    <text evidence="2 3">O-glycosylated; glycans contain alpha(2,3)-linked sialic acids (By similarity).</text>
</comment>
<comment type="similarity">
    <text evidence="5">Belongs to the beta-defensin family.</text>
</comment>
<evidence type="ECO:0000250" key="1">
    <source>
        <dbReference type="UniProtKB" id="P59665"/>
    </source>
</evidence>
<evidence type="ECO:0000250" key="2">
    <source>
        <dbReference type="UniProtKB" id="Q9BEE3"/>
    </source>
</evidence>
<evidence type="ECO:0000250" key="3">
    <source>
        <dbReference type="UniProtKB" id="Q9BYW3"/>
    </source>
</evidence>
<evidence type="ECO:0000255" key="4"/>
<evidence type="ECO:0000305" key="5"/>
<sequence>MKSLLFTLAVFMLLAQLVSGNWYVKKCLNDVGICKKKCKPEEMHVKNGWAMCGKQRDCCVPADRRANYPAFCVQTKTTRTSTVTATTATTTLMMTTASMSLMAPTPVSPTG</sequence>
<gene>
    <name type="primary">DEFB126</name>
</gene>
<organism>
    <name type="scientific">Gorilla gorilla gorilla</name>
    <name type="common">Western lowland gorilla</name>
    <dbReference type="NCBI Taxonomy" id="9595"/>
    <lineage>
        <taxon>Eukaryota</taxon>
        <taxon>Metazoa</taxon>
        <taxon>Chordata</taxon>
        <taxon>Craniata</taxon>
        <taxon>Vertebrata</taxon>
        <taxon>Euteleostomi</taxon>
        <taxon>Mammalia</taxon>
        <taxon>Eutheria</taxon>
        <taxon>Euarchontoglires</taxon>
        <taxon>Primates</taxon>
        <taxon>Haplorrhini</taxon>
        <taxon>Catarrhini</taxon>
        <taxon>Hominidae</taxon>
        <taxon>Gorilla</taxon>
    </lineage>
</organism>
<accession>A4H243</accession>
<keyword id="KW-0044">Antibiotic</keyword>
<keyword id="KW-0929">Antimicrobial</keyword>
<keyword id="KW-0165">Cleavage on pair of basic residues</keyword>
<keyword id="KW-0211">Defensin</keyword>
<keyword id="KW-1015">Disulfide bond</keyword>
<keyword id="KW-0278">Fertilization</keyword>
<keyword id="KW-1185">Reference proteome</keyword>
<keyword id="KW-0964">Secreted</keyword>
<keyword id="KW-0732">Signal</keyword>
<proteinExistence type="inferred from homology"/>
<protein>
    <recommendedName>
        <fullName>Beta-defensin 126</fullName>
    </recommendedName>
    <alternativeName>
        <fullName>Defensin, beta 126</fullName>
    </alternativeName>
</protein>